<proteinExistence type="evidence at protein level"/>
<evidence type="ECO:0000269" key="1">
    <source>
    </source>
</evidence>
<evidence type="ECO:0000269" key="2">
    <source>
    </source>
</evidence>
<evidence type="ECO:0000269" key="3">
    <source>
    </source>
</evidence>
<evidence type="ECO:0000269" key="4">
    <source>
    </source>
</evidence>
<evidence type="ECO:0000305" key="5"/>
<evidence type="ECO:0007744" key="6">
    <source>
    </source>
</evidence>
<sequence length="363" mass="39904">MEALVVDAGSKFLKAGAAIPDQSPAMIIPSQMKRMVDDGSSSADNPTTVFEDVTLDPIERGLIRDWDAMEDLLRYVVYTGLGWEEGNEGNILFTDPLCTPKAIREQLVQLMFETFNVSGFYASEQAVLSLYAVGRISGCTVDIGHGKIDIAPVLEGAVQHIASKRFELGGTELTKLFAQELGKTNPSMNLSMSDVEKLKEQYANCAEDEIAYKKTQNCEIEQHTLPDGQVISIGRERYSVGEALFQPSILGLEEHGIVEQLVRIISTVSSENHRQLLENTVLCGGTTSMTGFESRFQKEANLCSSAIRPTLVKPPEYMPENLGMYSAWVGGAILAKVVFPQNQHVTKADYDETGPSVVHRKCF</sequence>
<feature type="chain" id="PRO_0000320542" description="Actin-related protein 7">
    <location>
        <begin position="1"/>
        <end position="363"/>
    </location>
</feature>
<feature type="modified residue" description="N-acetylmethionine" evidence="6">
    <location>
        <position position="1"/>
    </location>
</feature>
<dbReference type="EMBL" id="AF507915">
    <property type="protein sequence ID" value="AAM53247.1"/>
    <property type="molecule type" value="mRNA"/>
</dbReference>
<dbReference type="EMBL" id="AL162295">
    <property type="protein sequence ID" value="CAB82687.1"/>
    <property type="status" value="ALT_SEQ"/>
    <property type="molecule type" value="Genomic_DNA"/>
</dbReference>
<dbReference type="EMBL" id="CP002686">
    <property type="protein sequence ID" value="AEE80115.1"/>
    <property type="molecule type" value="Genomic_DNA"/>
</dbReference>
<dbReference type="EMBL" id="AY099661">
    <property type="protein sequence ID" value="AAM20512.1"/>
    <property type="molecule type" value="mRNA"/>
</dbReference>
<dbReference type="EMBL" id="AY128849">
    <property type="protein sequence ID" value="AAM91249.1"/>
    <property type="molecule type" value="mRNA"/>
</dbReference>
<dbReference type="EMBL" id="AY087739">
    <property type="protein sequence ID" value="AAM65276.1"/>
    <property type="molecule type" value="mRNA"/>
</dbReference>
<dbReference type="EMBL" id="AK226494">
    <property type="protein sequence ID" value="BAE98636.1"/>
    <property type="molecule type" value="mRNA"/>
</dbReference>
<dbReference type="EMBL" id="BK000423">
    <property type="protein sequence ID" value="DAA00028.1"/>
    <property type="molecule type" value="Genomic_DNA"/>
</dbReference>
<dbReference type="PIR" id="T47894">
    <property type="entry name" value="T47894"/>
</dbReference>
<dbReference type="RefSeq" id="NP_567105.1">
    <property type="nucleotide sequence ID" value="NM_115947.3"/>
</dbReference>
<dbReference type="SMR" id="Q8L4Y5"/>
<dbReference type="BioGRID" id="10568">
    <property type="interactions" value="82"/>
</dbReference>
<dbReference type="ComplexPortal" id="CPX-7723">
    <property type="entry name" value="BRAHMA SWI/SNF ATP-dependent chromatin remodeling complex"/>
</dbReference>
<dbReference type="ComplexPortal" id="CPX-7726">
    <property type="entry name" value="SYD-associated SWI/SNF ATP-dependent chromatin remodeling complex"/>
</dbReference>
<dbReference type="ComplexPortal" id="CPX-7727">
    <property type="entry name" value="MINU1/2-associated SWI/SNF ATP-dependent chromatin remodeling complex"/>
</dbReference>
<dbReference type="FunCoup" id="Q8L4Y5">
    <property type="interactions" value="2489"/>
</dbReference>
<dbReference type="STRING" id="3702.Q8L4Y5"/>
<dbReference type="iPTMnet" id="Q8L4Y5"/>
<dbReference type="PaxDb" id="3702-AT3G60830.1"/>
<dbReference type="ProteomicsDB" id="246923"/>
<dbReference type="EnsemblPlants" id="AT3G60830.1">
    <property type="protein sequence ID" value="AT3G60830.1"/>
    <property type="gene ID" value="AT3G60830"/>
</dbReference>
<dbReference type="GeneID" id="825254"/>
<dbReference type="Gramene" id="AT3G60830.1">
    <property type="protein sequence ID" value="AT3G60830.1"/>
    <property type="gene ID" value="AT3G60830"/>
</dbReference>
<dbReference type="KEGG" id="ath:AT3G60830"/>
<dbReference type="Araport" id="AT3G60830"/>
<dbReference type="TAIR" id="AT3G60830">
    <property type="gene designation" value="ARP7"/>
</dbReference>
<dbReference type="eggNOG" id="KOG0676">
    <property type="taxonomic scope" value="Eukaryota"/>
</dbReference>
<dbReference type="HOGENOM" id="CLU_027965_0_3_1"/>
<dbReference type="InParanoid" id="Q8L4Y5"/>
<dbReference type="OMA" id="YMPENML"/>
<dbReference type="OrthoDB" id="74201at2759"/>
<dbReference type="PhylomeDB" id="Q8L4Y5"/>
<dbReference type="CD-CODE" id="4299E36E">
    <property type="entry name" value="Nucleolus"/>
</dbReference>
<dbReference type="PRO" id="PR:Q8L4Y5"/>
<dbReference type="Proteomes" id="UP000006548">
    <property type="component" value="Chromosome 3"/>
</dbReference>
<dbReference type="ExpressionAtlas" id="Q8L4Y5">
    <property type="expression patterns" value="baseline and differential"/>
</dbReference>
<dbReference type="GO" id="GO:0005829">
    <property type="term" value="C:cytosol"/>
    <property type="evidence" value="ECO:0007005"/>
    <property type="project" value="TAIR"/>
</dbReference>
<dbReference type="GO" id="GO:0005634">
    <property type="term" value="C:nucleus"/>
    <property type="evidence" value="ECO:0000314"/>
    <property type="project" value="TAIR"/>
</dbReference>
<dbReference type="GO" id="GO:0005200">
    <property type="term" value="F:structural constituent of cytoskeleton"/>
    <property type="evidence" value="ECO:0000250"/>
    <property type="project" value="TAIR"/>
</dbReference>
<dbReference type="GO" id="GO:0009653">
    <property type="term" value="P:anatomical structure morphogenesis"/>
    <property type="evidence" value="ECO:0000315"/>
    <property type="project" value="TAIR"/>
</dbReference>
<dbReference type="GO" id="GO:0006325">
    <property type="term" value="P:chromatin organization"/>
    <property type="evidence" value="ECO:0000304"/>
    <property type="project" value="TAIR"/>
</dbReference>
<dbReference type="GO" id="GO:0009793">
    <property type="term" value="P:embryo development ending in seed dormancy"/>
    <property type="evidence" value="ECO:0000315"/>
    <property type="project" value="TAIR"/>
</dbReference>
<dbReference type="GO" id="GO:0010227">
    <property type="term" value="P:floral organ abscission"/>
    <property type="evidence" value="ECO:0000315"/>
    <property type="project" value="TAIR"/>
</dbReference>
<dbReference type="CDD" id="cd10209">
    <property type="entry name" value="ASKHA_NBD_AtARP7-like"/>
    <property type="match status" value="1"/>
</dbReference>
<dbReference type="FunFam" id="3.30.420.40:FF:000150">
    <property type="entry name" value="Actin-related protein 7"/>
    <property type="match status" value="1"/>
</dbReference>
<dbReference type="FunFam" id="3.90.640.10:FF:000026">
    <property type="entry name" value="Actin-related protein 7"/>
    <property type="match status" value="1"/>
</dbReference>
<dbReference type="Gene3D" id="3.30.420.40">
    <property type="match status" value="2"/>
</dbReference>
<dbReference type="Gene3D" id="3.90.640.10">
    <property type="entry name" value="Actin, Chain A, domain 4"/>
    <property type="match status" value="1"/>
</dbReference>
<dbReference type="InterPro" id="IPR004000">
    <property type="entry name" value="Actin"/>
</dbReference>
<dbReference type="InterPro" id="IPR043129">
    <property type="entry name" value="ATPase_NBD"/>
</dbReference>
<dbReference type="PANTHER" id="PTHR11937">
    <property type="entry name" value="ACTIN"/>
    <property type="match status" value="1"/>
</dbReference>
<dbReference type="Pfam" id="PF00022">
    <property type="entry name" value="Actin"/>
    <property type="match status" value="1"/>
</dbReference>
<dbReference type="PRINTS" id="PR00190">
    <property type="entry name" value="ACTIN"/>
</dbReference>
<dbReference type="SMART" id="SM00268">
    <property type="entry name" value="ACTIN"/>
    <property type="match status" value="1"/>
</dbReference>
<dbReference type="SUPFAM" id="SSF53067">
    <property type="entry name" value="Actin-like ATPase domain"/>
    <property type="match status" value="2"/>
</dbReference>
<name>ARP7_ARATH</name>
<protein>
    <recommendedName>
        <fullName>Actin-related protein 7</fullName>
    </recommendedName>
</protein>
<gene>
    <name type="primary">ARP7</name>
    <name type="ordered locus">At3g60830</name>
    <name type="ORF">T4C21.240</name>
</gene>
<organism>
    <name type="scientific">Arabidopsis thaliana</name>
    <name type="common">Mouse-ear cress</name>
    <dbReference type="NCBI Taxonomy" id="3702"/>
    <lineage>
        <taxon>Eukaryota</taxon>
        <taxon>Viridiplantae</taxon>
        <taxon>Streptophyta</taxon>
        <taxon>Embryophyta</taxon>
        <taxon>Tracheophyta</taxon>
        <taxon>Spermatophyta</taxon>
        <taxon>Magnoliopsida</taxon>
        <taxon>eudicotyledons</taxon>
        <taxon>Gunneridae</taxon>
        <taxon>Pentapetalae</taxon>
        <taxon>rosids</taxon>
        <taxon>malvids</taxon>
        <taxon>Brassicales</taxon>
        <taxon>Brassicaceae</taxon>
        <taxon>Camelineae</taxon>
        <taxon>Arabidopsis</taxon>
    </lineage>
</organism>
<comment type="function">
    <text evidence="4">Essential protein required during embryogenesis and all plant development stages, probably through a chromatin-mediated regulation of gene expression.</text>
</comment>
<comment type="subcellular location">
    <subcellularLocation>
        <location evidence="2 3 4">Nucleus</location>
    </subcellularLocation>
    <subcellularLocation>
        <location evidence="2">Cytoplasm</location>
    </subcellularLocation>
    <text>Localized in the nucleus during the interphase, but is released into the cytoplasm during the mitotic phase (PubMed:12609034).</text>
</comment>
<comment type="tissue specificity">
    <text evidence="1 2 4">Mostly expressed in flowers, and, to a lower extent, in roots, seedlings, leaves and siliques (at protein level).</text>
</comment>
<comment type="induction">
    <text evidence="2">Before cytokinesis.</text>
</comment>
<comment type="similarity">
    <text evidence="5">Belongs to the actin family. Plant ARP7 subfamily.</text>
</comment>
<comment type="sequence caution" evidence="5">
    <conflict type="erroneous gene model prediction">
        <sequence resource="EMBL-CDS" id="CAB82687"/>
    </conflict>
</comment>
<accession>Q8L4Y5</accession>
<accession>Q0WW62</accession>
<accession>Q9LZY1</accession>
<keyword id="KW-0007">Acetylation</keyword>
<keyword id="KW-0156">Chromatin regulator</keyword>
<keyword id="KW-0963">Cytoplasm</keyword>
<keyword id="KW-0217">Developmental protein</keyword>
<keyword id="KW-0539">Nucleus</keyword>
<keyword id="KW-1185">Reference proteome</keyword>
<reference key="1">
    <citation type="journal article" date="2002" name="Plant Physiol.">
        <title>Arabidopsis contains ancient classes of differentially expressed actin-related protein genes.</title>
        <authorList>
            <person name="McKinney E.C."/>
            <person name="Kandasamy M.K."/>
            <person name="Meagher R.B."/>
        </authorList>
    </citation>
    <scope>NUCLEOTIDE SEQUENCE [MRNA]</scope>
    <scope>IDENTIFICATION</scope>
    <scope>TISSUE SPECIFICITY</scope>
    <scope>GENE FAMILY</scope>
    <source>
        <strain>cv. Columbia</strain>
    </source>
</reference>
<reference key="2">
    <citation type="journal article" date="2000" name="Nature">
        <title>Sequence and analysis of chromosome 3 of the plant Arabidopsis thaliana.</title>
        <authorList>
            <person name="Salanoubat M."/>
            <person name="Lemcke K."/>
            <person name="Rieger M."/>
            <person name="Ansorge W."/>
            <person name="Unseld M."/>
            <person name="Fartmann B."/>
            <person name="Valle G."/>
            <person name="Bloecker H."/>
            <person name="Perez-Alonso M."/>
            <person name="Obermaier B."/>
            <person name="Delseny M."/>
            <person name="Boutry M."/>
            <person name="Grivell L.A."/>
            <person name="Mache R."/>
            <person name="Puigdomenech P."/>
            <person name="De Simone V."/>
            <person name="Choisne N."/>
            <person name="Artiguenave F."/>
            <person name="Robert C."/>
            <person name="Brottier P."/>
            <person name="Wincker P."/>
            <person name="Cattolico L."/>
            <person name="Weissenbach J."/>
            <person name="Saurin W."/>
            <person name="Quetier F."/>
            <person name="Schaefer M."/>
            <person name="Mueller-Auer S."/>
            <person name="Gabel C."/>
            <person name="Fuchs M."/>
            <person name="Benes V."/>
            <person name="Wurmbach E."/>
            <person name="Drzonek H."/>
            <person name="Erfle H."/>
            <person name="Jordan N."/>
            <person name="Bangert S."/>
            <person name="Wiedelmann R."/>
            <person name="Kranz H."/>
            <person name="Voss H."/>
            <person name="Holland R."/>
            <person name="Brandt P."/>
            <person name="Nyakatura G."/>
            <person name="Vezzi A."/>
            <person name="D'Angelo M."/>
            <person name="Pallavicini A."/>
            <person name="Toppo S."/>
            <person name="Simionati B."/>
            <person name="Conrad A."/>
            <person name="Hornischer K."/>
            <person name="Kauer G."/>
            <person name="Loehnert T.-H."/>
            <person name="Nordsiek G."/>
            <person name="Reichelt J."/>
            <person name="Scharfe M."/>
            <person name="Schoen O."/>
            <person name="Bargues M."/>
            <person name="Terol J."/>
            <person name="Climent J."/>
            <person name="Navarro P."/>
            <person name="Collado C."/>
            <person name="Perez-Perez A."/>
            <person name="Ottenwaelder B."/>
            <person name="Duchemin D."/>
            <person name="Cooke R."/>
            <person name="Laudie M."/>
            <person name="Berger-Llauro C."/>
            <person name="Purnelle B."/>
            <person name="Masuy D."/>
            <person name="de Haan M."/>
            <person name="Maarse A.C."/>
            <person name="Alcaraz J.-P."/>
            <person name="Cottet A."/>
            <person name="Casacuberta E."/>
            <person name="Monfort A."/>
            <person name="Argiriou A."/>
            <person name="Flores M."/>
            <person name="Liguori R."/>
            <person name="Vitale D."/>
            <person name="Mannhaupt G."/>
            <person name="Haase D."/>
            <person name="Schoof H."/>
            <person name="Rudd S."/>
            <person name="Zaccaria P."/>
            <person name="Mewes H.-W."/>
            <person name="Mayer K.F.X."/>
            <person name="Kaul S."/>
            <person name="Town C.D."/>
            <person name="Koo H.L."/>
            <person name="Tallon L.J."/>
            <person name="Jenkins J."/>
            <person name="Rooney T."/>
            <person name="Rizzo M."/>
            <person name="Walts A."/>
            <person name="Utterback T."/>
            <person name="Fujii C.Y."/>
            <person name="Shea T.P."/>
            <person name="Creasy T.H."/>
            <person name="Haas B."/>
            <person name="Maiti R."/>
            <person name="Wu D."/>
            <person name="Peterson J."/>
            <person name="Van Aken S."/>
            <person name="Pai G."/>
            <person name="Militscher J."/>
            <person name="Sellers P."/>
            <person name="Gill J.E."/>
            <person name="Feldblyum T.V."/>
            <person name="Preuss D."/>
            <person name="Lin X."/>
            <person name="Nierman W.C."/>
            <person name="Salzberg S.L."/>
            <person name="White O."/>
            <person name="Venter J.C."/>
            <person name="Fraser C.M."/>
            <person name="Kaneko T."/>
            <person name="Nakamura Y."/>
            <person name="Sato S."/>
            <person name="Kato T."/>
            <person name="Asamizu E."/>
            <person name="Sasamoto S."/>
            <person name="Kimura T."/>
            <person name="Idesawa K."/>
            <person name="Kawashima K."/>
            <person name="Kishida Y."/>
            <person name="Kiyokawa C."/>
            <person name="Kohara M."/>
            <person name="Matsumoto M."/>
            <person name="Matsuno A."/>
            <person name="Muraki A."/>
            <person name="Nakayama S."/>
            <person name="Nakazaki N."/>
            <person name="Shinpo S."/>
            <person name="Takeuchi C."/>
            <person name="Wada T."/>
            <person name="Watanabe A."/>
            <person name="Yamada M."/>
            <person name="Yasuda M."/>
            <person name="Tabata S."/>
        </authorList>
    </citation>
    <scope>NUCLEOTIDE SEQUENCE [LARGE SCALE GENOMIC DNA]</scope>
    <source>
        <strain>cv. Columbia</strain>
    </source>
</reference>
<reference key="3">
    <citation type="journal article" date="2017" name="Plant J.">
        <title>Araport11: a complete reannotation of the Arabidopsis thaliana reference genome.</title>
        <authorList>
            <person name="Cheng C.Y."/>
            <person name="Krishnakumar V."/>
            <person name="Chan A.P."/>
            <person name="Thibaud-Nissen F."/>
            <person name="Schobel S."/>
            <person name="Town C.D."/>
        </authorList>
    </citation>
    <scope>GENOME REANNOTATION</scope>
    <source>
        <strain>cv. Columbia</strain>
    </source>
</reference>
<reference key="4">
    <citation type="journal article" date="2003" name="Science">
        <title>Empirical analysis of transcriptional activity in the Arabidopsis genome.</title>
        <authorList>
            <person name="Yamada K."/>
            <person name="Lim J."/>
            <person name="Dale J.M."/>
            <person name="Chen H."/>
            <person name="Shinn P."/>
            <person name="Palm C.J."/>
            <person name="Southwick A.M."/>
            <person name="Wu H.C."/>
            <person name="Kim C.J."/>
            <person name="Nguyen M."/>
            <person name="Pham P.K."/>
            <person name="Cheuk R.F."/>
            <person name="Karlin-Newmann G."/>
            <person name="Liu S.X."/>
            <person name="Lam B."/>
            <person name="Sakano H."/>
            <person name="Wu T."/>
            <person name="Yu G."/>
            <person name="Miranda M."/>
            <person name="Quach H.L."/>
            <person name="Tripp M."/>
            <person name="Chang C.H."/>
            <person name="Lee J.M."/>
            <person name="Toriumi M.J."/>
            <person name="Chan M.M."/>
            <person name="Tang C.C."/>
            <person name="Onodera C.S."/>
            <person name="Deng J.M."/>
            <person name="Akiyama K."/>
            <person name="Ansari Y."/>
            <person name="Arakawa T."/>
            <person name="Banh J."/>
            <person name="Banno F."/>
            <person name="Bowser L."/>
            <person name="Brooks S.Y."/>
            <person name="Carninci P."/>
            <person name="Chao Q."/>
            <person name="Choy N."/>
            <person name="Enju A."/>
            <person name="Goldsmith A.D."/>
            <person name="Gurjal M."/>
            <person name="Hansen N.F."/>
            <person name="Hayashizaki Y."/>
            <person name="Johnson-Hopson C."/>
            <person name="Hsuan V.W."/>
            <person name="Iida K."/>
            <person name="Karnes M."/>
            <person name="Khan S."/>
            <person name="Koesema E."/>
            <person name="Ishida J."/>
            <person name="Jiang P.X."/>
            <person name="Jones T."/>
            <person name="Kawai J."/>
            <person name="Kamiya A."/>
            <person name="Meyers C."/>
            <person name="Nakajima M."/>
            <person name="Narusaka M."/>
            <person name="Seki M."/>
            <person name="Sakurai T."/>
            <person name="Satou M."/>
            <person name="Tamse R."/>
            <person name="Vaysberg M."/>
            <person name="Wallender E.K."/>
            <person name="Wong C."/>
            <person name="Yamamura Y."/>
            <person name="Yuan S."/>
            <person name="Shinozaki K."/>
            <person name="Davis R.W."/>
            <person name="Theologis A."/>
            <person name="Ecker J.R."/>
        </authorList>
    </citation>
    <scope>NUCLEOTIDE SEQUENCE [LARGE SCALE MRNA]</scope>
    <source>
        <strain>cv. Columbia</strain>
    </source>
</reference>
<reference key="5">
    <citation type="submission" date="2002-03" db="EMBL/GenBank/DDBJ databases">
        <title>Full-length cDNA from Arabidopsis thaliana.</title>
        <authorList>
            <person name="Brover V.V."/>
            <person name="Troukhan M.E."/>
            <person name="Alexandrov N.A."/>
            <person name="Lu Y.-P."/>
            <person name="Flavell R.B."/>
            <person name="Feldmann K.A."/>
        </authorList>
    </citation>
    <scope>NUCLEOTIDE SEQUENCE [LARGE SCALE MRNA]</scope>
</reference>
<reference key="6">
    <citation type="submission" date="2006-07" db="EMBL/GenBank/DDBJ databases">
        <title>Large-scale analysis of RIKEN Arabidopsis full-length (RAFL) cDNAs.</title>
        <authorList>
            <person name="Totoki Y."/>
            <person name="Seki M."/>
            <person name="Ishida J."/>
            <person name="Nakajima M."/>
            <person name="Enju A."/>
            <person name="Kamiya A."/>
            <person name="Narusaka M."/>
            <person name="Shin-i T."/>
            <person name="Nakagawa M."/>
            <person name="Sakamoto N."/>
            <person name="Oishi K."/>
            <person name="Kohara Y."/>
            <person name="Kobayashi M."/>
            <person name="Toyoda A."/>
            <person name="Sakaki Y."/>
            <person name="Sakurai T."/>
            <person name="Iida K."/>
            <person name="Akiyama K."/>
            <person name="Satou M."/>
            <person name="Toyoda T."/>
            <person name="Konagaya A."/>
            <person name="Carninci P."/>
            <person name="Kawai J."/>
            <person name="Hayashizaki Y."/>
            <person name="Shinozaki K."/>
        </authorList>
    </citation>
    <scope>NUCLEOTIDE SEQUENCE [LARGE SCALE MRNA] OF 215-363</scope>
    <source>
        <strain>cv. Columbia</strain>
    </source>
</reference>
<reference key="7">
    <citation type="journal article" date="2003" name="Plant J.">
        <title>Cell cycle-dependent association of Arabidopsis actin-related proteins AtARP4 and AtARP7 with the nucleus.</title>
        <authorList>
            <person name="Kandasamy M.K."/>
            <person name="McKinney E.C."/>
            <person name="Meagher R.B."/>
        </authorList>
    </citation>
    <scope>TISSUE SPECIFICITY</scope>
    <scope>INDUCTION</scope>
    <scope>SUBCELLULAR LOCATION</scope>
</reference>
<reference key="8">
    <citation type="journal article" date="2004" name="Trends Plant Sci.">
        <title>Plant actin-related proteins.</title>
        <authorList>
            <person name="Kandasamy M.K."/>
            <person name="Deal R.B."/>
            <person name="McKinney E.C."/>
            <person name="Meagher R.B."/>
        </authorList>
    </citation>
    <scope>SUBCELLULAR LOCATION</scope>
    <scope>REVIEW</scope>
    <scope>GENE FAMILY</scope>
    <scope>NOMENCLATURE</scope>
</reference>
<reference key="9">
    <citation type="journal article" date="2005" name="Plant Physiol.">
        <title>Arabidopsis ARP7 is an essential actin-related protein required for normal embryogenesis, plant architecture, and floral organ abscission.</title>
        <authorList>
            <person name="Kandasamy M.K."/>
            <person name="McKinney E.C."/>
            <person name="Deal R.B."/>
            <person name="Meagher R.B."/>
        </authorList>
    </citation>
    <scope>FUNCTION</scope>
    <scope>TISSUE SPECIFICITY</scope>
    <scope>SUBCELLULAR LOCATION</scope>
</reference>
<reference key="10">
    <citation type="journal article" date="2012" name="Mol. Cell. Proteomics">
        <title>Comparative large-scale characterisation of plant vs. mammal proteins reveals similar and idiosyncratic N-alpha acetylation features.</title>
        <authorList>
            <person name="Bienvenut W.V."/>
            <person name="Sumpton D."/>
            <person name="Martinez A."/>
            <person name="Lilla S."/>
            <person name="Espagne C."/>
            <person name="Meinnel T."/>
            <person name="Giglione C."/>
        </authorList>
    </citation>
    <scope>ACETYLATION [LARGE SCALE ANALYSIS] AT MET-1</scope>
    <scope>IDENTIFICATION BY MASS SPECTROMETRY [LARGE SCALE ANALYSIS]</scope>
</reference>